<evidence type="ECO:0000255" key="1">
    <source>
        <dbReference type="HAMAP-Rule" id="MF_00016"/>
    </source>
</evidence>
<accession>C0Q2F5</accession>
<reference key="1">
    <citation type="journal article" date="2009" name="PLoS ONE">
        <title>Salmonella paratyphi C: genetic divergence from Salmonella choleraesuis and pathogenic convergence with Salmonella typhi.</title>
        <authorList>
            <person name="Liu W.-Q."/>
            <person name="Feng Y."/>
            <person name="Wang Y."/>
            <person name="Zou Q.-H."/>
            <person name="Chen F."/>
            <person name="Guo J.-T."/>
            <person name="Peng Y.-H."/>
            <person name="Jin Y."/>
            <person name="Li Y.-G."/>
            <person name="Hu S.-N."/>
            <person name="Johnston R.N."/>
            <person name="Liu G.-R."/>
            <person name="Liu S.-L."/>
        </authorList>
    </citation>
    <scope>NUCLEOTIDE SEQUENCE [LARGE SCALE GENOMIC DNA]</scope>
    <source>
        <strain>RKS4594</strain>
    </source>
</reference>
<gene>
    <name evidence="1" type="primary">ruvB</name>
    <name type="ordered locus">SPC_1820</name>
</gene>
<comment type="function">
    <text evidence="1">The RuvA-RuvB-RuvC complex processes Holliday junction (HJ) DNA during genetic recombination and DNA repair, while the RuvA-RuvB complex plays an important role in the rescue of blocked DNA replication forks via replication fork reversal (RFR). RuvA specifically binds to HJ cruciform DNA, conferring on it an open structure. The RuvB hexamer acts as an ATP-dependent pump, pulling dsDNA into and through the RuvAB complex. RuvB forms 2 homohexamers on either side of HJ DNA bound by 1 or 2 RuvA tetramers; 4 subunits per hexamer contact DNA at a time. Coordinated motions by a converter formed by DNA-disengaged RuvB subunits stimulates ATP hydrolysis and nucleotide exchange. Immobilization of the converter enables RuvB to convert the ATP-contained energy into a lever motion, pulling 2 nucleotides of DNA out of the RuvA tetramer per ATP hydrolyzed, thus driving DNA branch migration. The RuvB motors rotate together with the DNA substrate, which together with the progressing nucleotide cycle form the mechanistic basis for DNA recombination by continuous HJ branch migration. Branch migration allows RuvC to scan DNA until it finds its consensus sequence, where it cleaves and resolves cruciform DNA.</text>
</comment>
<comment type="catalytic activity">
    <reaction evidence="1">
        <text>ATP + H2O = ADP + phosphate + H(+)</text>
        <dbReference type="Rhea" id="RHEA:13065"/>
        <dbReference type="ChEBI" id="CHEBI:15377"/>
        <dbReference type="ChEBI" id="CHEBI:15378"/>
        <dbReference type="ChEBI" id="CHEBI:30616"/>
        <dbReference type="ChEBI" id="CHEBI:43474"/>
        <dbReference type="ChEBI" id="CHEBI:456216"/>
    </reaction>
</comment>
<comment type="subunit">
    <text evidence="1">Homohexamer. Forms an RuvA(8)-RuvB(12)-Holliday junction (HJ) complex. HJ DNA is sandwiched between 2 RuvA tetramers; dsDNA enters through RuvA and exits via RuvB. An RuvB hexamer assembles on each DNA strand where it exits the tetramer. Each RuvB hexamer is contacted by two RuvA subunits (via domain III) on 2 adjacent RuvB subunits; this complex drives branch migration. In the full resolvosome a probable DNA-RuvA(4)-RuvB(12)-RuvC(2) complex forms which resolves the HJ.</text>
</comment>
<comment type="subcellular location">
    <subcellularLocation>
        <location evidence="1">Cytoplasm</location>
    </subcellularLocation>
</comment>
<comment type="domain">
    <text evidence="1">Has 3 domains, the large (RuvB-L) and small ATPase (RuvB-S) domains and the C-terminal head (RuvB-H) domain. The head domain binds DNA, while the ATPase domains jointly bind ATP, ADP or are empty depending on the state of the subunit in the translocation cycle. During a single DNA translocation step the structure of each domain remains the same, but their relative positions change.</text>
</comment>
<comment type="similarity">
    <text evidence="1">Belongs to the RuvB family.</text>
</comment>
<sequence length="336" mass="36976">MIEADRLISAGATIAEDVADRAIRPKLLAEYVGQPQVRSQMEIFIQAAKLRGDALDHLLIFGPPGLGKTTLANIVANEMGVNLRTTSGPVLEKAGDLAAMLTNLEPHDVLFIDEIHRLSPVVEEVLYPAMEDYQLDIMIGEGPAARSIKIDLPPFTLIGATTRAGSLTSPLRDRFGIVQRLEFYQVPDLQHIVGRSARHMGLEMSDDGALEVARRARGTPRIANRLLRRVRDFAEVKHDGAISAEIAAQALDMLNVDAEGFDYMDRKLLLAVIDKFFGGPVGLDNLAAAIGEERETIEDVLEPYLIQQGFLQRTPRGRMATVRAWNHFGITPPEMP</sequence>
<name>RUVB_SALPC</name>
<dbReference type="EC" id="3.6.4.-" evidence="1"/>
<dbReference type="EMBL" id="CP000857">
    <property type="protein sequence ID" value="ACN45958.1"/>
    <property type="molecule type" value="Genomic_DNA"/>
</dbReference>
<dbReference type="RefSeq" id="WP_000568504.1">
    <property type="nucleotide sequence ID" value="NC_012125.1"/>
</dbReference>
<dbReference type="SMR" id="C0Q2F5"/>
<dbReference type="KEGG" id="sei:SPC_1820"/>
<dbReference type="HOGENOM" id="CLU_055599_1_0_6"/>
<dbReference type="Proteomes" id="UP000001599">
    <property type="component" value="Chromosome"/>
</dbReference>
<dbReference type="GO" id="GO:0005737">
    <property type="term" value="C:cytoplasm"/>
    <property type="evidence" value="ECO:0007669"/>
    <property type="project" value="UniProtKB-SubCell"/>
</dbReference>
<dbReference type="GO" id="GO:0048476">
    <property type="term" value="C:Holliday junction resolvase complex"/>
    <property type="evidence" value="ECO:0007669"/>
    <property type="project" value="UniProtKB-UniRule"/>
</dbReference>
<dbReference type="GO" id="GO:0005524">
    <property type="term" value="F:ATP binding"/>
    <property type="evidence" value="ECO:0007669"/>
    <property type="project" value="UniProtKB-UniRule"/>
</dbReference>
<dbReference type="GO" id="GO:0016887">
    <property type="term" value="F:ATP hydrolysis activity"/>
    <property type="evidence" value="ECO:0007669"/>
    <property type="project" value="InterPro"/>
</dbReference>
<dbReference type="GO" id="GO:0000400">
    <property type="term" value="F:four-way junction DNA binding"/>
    <property type="evidence" value="ECO:0007669"/>
    <property type="project" value="UniProtKB-UniRule"/>
</dbReference>
<dbReference type="GO" id="GO:0009378">
    <property type="term" value="F:four-way junction helicase activity"/>
    <property type="evidence" value="ECO:0007669"/>
    <property type="project" value="InterPro"/>
</dbReference>
<dbReference type="GO" id="GO:0006310">
    <property type="term" value="P:DNA recombination"/>
    <property type="evidence" value="ECO:0007669"/>
    <property type="project" value="UniProtKB-UniRule"/>
</dbReference>
<dbReference type="GO" id="GO:0006281">
    <property type="term" value="P:DNA repair"/>
    <property type="evidence" value="ECO:0007669"/>
    <property type="project" value="UniProtKB-UniRule"/>
</dbReference>
<dbReference type="CDD" id="cd00009">
    <property type="entry name" value="AAA"/>
    <property type="match status" value="1"/>
</dbReference>
<dbReference type="FunFam" id="1.10.10.10:FF:000086">
    <property type="entry name" value="Holliday junction ATP-dependent DNA helicase RuvB"/>
    <property type="match status" value="1"/>
</dbReference>
<dbReference type="FunFam" id="1.10.8.60:FF:000023">
    <property type="entry name" value="Holliday junction ATP-dependent DNA helicase RuvB"/>
    <property type="match status" value="1"/>
</dbReference>
<dbReference type="FunFam" id="3.40.50.300:FF:000073">
    <property type="entry name" value="Holliday junction ATP-dependent DNA helicase RuvB"/>
    <property type="match status" value="1"/>
</dbReference>
<dbReference type="Gene3D" id="1.10.8.60">
    <property type="match status" value="1"/>
</dbReference>
<dbReference type="Gene3D" id="3.40.50.300">
    <property type="entry name" value="P-loop containing nucleotide triphosphate hydrolases"/>
    <property type="match status" value="1"/>
</dbReference>
<dbReference type="Gene3D" id="1.10.10.10">
    <property type="entry name" value="Winged helix-like DNA-binding domain superfamily/Winged helix DNA-binding domain"/>
    <property type="match status" value="1"/>
</dbReference>
<dbReference type="HAMAP" id="MF_00016">
    <property type="entry name" value="DNA_HJ_migration_RuvB"/>
    <property type="match status" value="1"/>
</dbReference>
<dbReference type="InterPro" id="IPR003593">
    <property type="entry name" value="AAA+_ATPase"/>
</dbReference>
<dbReference type="InterPro" id="IPR041445">
    <property type="entry name" value="AAA_lid_4"/>
</dbReference>
<dbReference type="InterPro" id="IPR004605">
    <property type="entry name" value="DNA_helicase_Holl-junc_RuvB"/>
</dbReference>
<dbReference type="InterPro" id="IPR027417">
    <property type="entry name" value="P-loop_NTPase"/>
</dbReference>
<dbReference type="InterPro" id="IPR008824">
    <property type="entry name" value="RuvB-like_N"/>
</dbReference>
<dbReference type="InterPro" id="IPR008823">
    <property type="entry name" value="RuvB_C"/>
</dbReference>
<dbReference type="InterPro" id="IPR036388">
    <property type="entry name" value="WH-like_DNA-bd_sf"/>
</dbReference>
<dbReference type="InterPro" id="IPR036390">
    <property type="entry name" value="WH_DNA-bd_sf"/>
</dbReference>
<dbReference type="NCBIfam" id="NF000868">
    <property type="entry name" value="PRK00080.1"/>
    <property type="match status" value="1"/>
</dbReference>
<dbReference type="NCBIfam" id="TIGR00635">
    <property type="entry name" value="ruvB"/>
    <property type="match status" value="1"/>
</dbReference>
<dbReference type="PANTHER" id="PTHR42848">
    <property type="match status" value="1"/>
</dbReference>
<dbReference type="PANTHER" id="PTHR42848:SF1">
    <property type="entry name" value="HOLLIDAY JUNCTION BRANCH MIGRATION COMPLEX SUBUNIT RUVB"/>
    <property type="match status" value="1"/>
</dbReference>
<dbReference type="Pfam" id="PF17864">
    <property type="entry name" value="AAA_lid_4"/>
    <property type="match status" value="1"/>
</dbReference>
<dbReference type="Pfam" id="PF05491">
    <property type="entry name" value="RuvB_C"/>
    <property type="match status" value="1"/>
</dbReference>
<dbReference type="Pfam" id="PF05496">
    <property type="entry name" value="RuvB_N"/>
    <property type="match status" value="1"/>
</dbReference>
<dbReference type="SMART" id="SM00382">
    <property type="entry name" value="AAA"/>
    <property type="match status" value="1"/>
</dbReference>
<dbReference type="SUPFAM" id="SSF52540">
    <property type="entry name" value="P-loop containing nucleoside triphosphate hydrolases"/>
    <property type="match status" value="1"/>
</dbReference>
<dbReference type="SUPFAM" id="SSF46785">
    <property type="entry name" value="Winged helix' DNA-binding domain"/>
    <property type="match status" value="1"/>
</dbReference>
<keyword id="KW-0067">ATP-binding</keyword>
<keyword id="KW-0963">Cytoplasm</keyword>
<keyword id="KW-0227">DNA damage</keyword>
<keyword id="KW-0233">DNA recombination</keyword>
<keyword id="KW-0234">DNA repair</keyword>
<keyword id="KW-0238">DNA-binding</keyword>
<keyword id="KW-0378">Hydrolase</keyword>
<keyword id="KW-0547">Nucleotide-binding</keyword>
<organism>
    <name type="scientific">Salmonella paratyphi C (strain RKS4594)</name>
    <dbReference type="NCBI Taxonomy" id="476213"/>
    <lineage>
        <taxon>Bacteria</taxon>
        <taxon>Pseudomonadati</taxon>
        <taxon>Pseudomonadota</taxon>
        <taxon>Gammaproteobacteria</taxon>
        <taxon>Enterobacterales</taxon>
        <taxon>Enterobacteriaceae</taxon>
        <taxon>Salmonella</taxon>
    </lineage>
</organism>
<feature type="chain" id="PRO_1000116654" description="Holliday junction branch migration complex subunit RuvB">
    <location>
        <begin position="1"/>
        <end position="336"/>
    </location>
</feature>
<feature type="region of interest" description="Large ATPase domain (RuvB-L)" evidence="1">
    <location>
        <begin position="4"/>
        <end position="184"/>
    </location>
</feature>
<feature type="region of interest" description="Small ATPAse domain (RuvB-S)" evidence="1">
    <location>
        <begin position="185"/>
        <end position="255"/>
    </location>
</feature>
<feature type="region of interest" description="Head domain (RuvB-H)" evidence="1">
    <location>
        <begin position="258"/>
        <end position="336"/>
    </location>
</feature>
<feature type="binding site" evidence="1">
    <location>
        <position position="23"/>
    </location>
    <ligand>
        <name>ATP</name>
        <dbReference type="ChEBI" id="CHEBI:30616"/>
    </ligand>
</feature>
<feature type="binding site" evidence="1">
    <location>
        <position position="24"/>
    </location>
    <ligand>
        <name>ATP</name>
        <dbReference type="ChEBI" id="CHEBI:30616"/>
    </ligand>
</feature>
<feature type="binding site" evidence="1">
    <location>
        <position position="65"/>
    </location>
    <ligand>
        <name>ATP</name>
        <dbReference type="ChEBI" id="CHEBI:30616"/>
    </ligand>
</feature>
<feature type="binding site" evidence="1">
    <location>
        <position position="68"/>
    </location>
    <ligand>
        <name>ATP</name>
        <dbReference type="ChEBI" id="CHEBI:30616"/>
    </ligand>
</feature>
<feature type="binding site" evidence="1">
    <location>
        <position position="69"/>
    </location>
    <ligand>
        <name>ATP</name>
        <dbReference type="ChEBI" id="CHEBI:30616"/>
    </ligand>
</feature>
<feature type="binding site" evidence="1">
    <location>
        <position position="69"/>
    </location>
    <ligand>
        <name>Mg(2+)</name>
        <dbReference type="ChEBI" id="CHEBI:18420"/>
    </ligand>
</feature>
<feature type="binding site" evidence="1">
    <location>
        <position position="70"/>
    </location>
    <ligand>
        <name>ATP</name>
        <dbReference type="ChEBI" id="CHEBI:30616"/>
    </ligand>
</feature>
<feature type="binding site" evidence="1">
    <location>
        <begin position="131"/>
        <end position="133"/>
    </location>
    <ligand>
        <name>ATP</name>
        <dbReference type="ChEBI" id="CHEBI:30616"/>
    </ligand>
</feature>
<feature type="binding site" evidence="1">
    <location>
        <position position="174"/>
    </location>
    <ligand>
        <name>ATP</name>
        <dbReference type="ChEBI" id="CHEBI:30616"/>
    </ligand>
</feature>
<feature type="binding site" evidence="1">
    <location>
        <position position="184"/>
    </location>
    <ligand>
        <name>ATP</name>
        <dbReference type="ChEBI" id="CHEBI:30616"/>
    </ligand>
</feature>
<feature type="binding site" evidence="1">
    <location>
        <position position="221"/>
    </location>
    <ligand>
        <name>ATP</name>
        <dbReference type="ChEBI" id="CHEBI:30616"/>
    </ligand>
</feature>
<feature type="binding site" evidence="1">
    <location>
        <position position="294"/>
    </location>
    <ligand>
        <name>DNA</name>
        <dbReference type="ChEBI" id="CHEBI:16991"/>
    </ligand>
</feature>
<feature type="binding site" evidence="1">
    <location>
        <position position="313"/>
    </location>
    <ligand>
        <name>DNA</name>
        <dbReference type="ChEBI" id="CHEBI:16991"/>
    </ligand>
</feature>
<feature type="binding site" evidence="1">
    <location>
        <position position="318"/>
    </location>
    <ligand>
        <name>DNA</name>
        <dbReference type="ChEBI" id="CHEBI:16991"/>
    </ligand>
</feature>
<protein>
    <recommendedName>
        <fullName evidence="1">Holliday junction branch migration complex subunit RuvB</fullName>
        <ecNumber evidence="1">3.6.4.-</ecNumber>
    </recommendedName>
</protein>
<proteinExistence type="inferred from homology"/>